<dbReference type="EC" id="1.1.1.79" evidence="1"/>
<dbReference type="EC" id="1.1.1.81" evidence="1"/>
<dbReference type="EMBL" id="CP000668">
    <property type="protein sequence ID" value="ABP38444.1"/>
    <property type="molecule type" value="Genomic_DNA"/>
</dbReference>
<dbReference type="PIR" id="AF0495">
    <property type="entry name" value="AF0495"/>
</dbReference>
<dbReference type="RefSeq" id="WP_002209630.1">
    <property type="nucleotide sequence ID" value="NZ_CP009715.1"/>
</dbReference>
<dbReference type="SMR" id="A4TGN1"/>
<dbReference type="GeneID" id="57974639"/>
<dbReference type="KEGG" id="ypp:YPDSF_0017"/>
<dbReference type="PATRIC" id="fig|386656.14.peg.560"/>
<dbReference type="GO" id="GO:0005829">
    <property type="term" value="C:cytosol"/>
    <property type="evidence" value="ECO:0007669"/>
    <property type="project" value="TreeGrafter"/>
</dbReference>
<dbReference type="GO" id="GO:0005886">
    <property type="term" value="C:plasma membrane"/>
    <property type="evidence" value="ECO:0007669"/>
    <property type="project" value="UniProtKB-UniRule"/>
</dbReference>
<dbReference type="GO" id="GO:0030267">
    <property type="term" value="F:glyoxylate reductase (NADPH) activity"/>
    <property type="evidence" value="ECO:0007669"/>
    <property type="project" value="UniProtKB-UniRule"/>
</dbReference>
<dbReference type="GO" id="GO:0008465">
    <property type="term" value="F:hydroxypyruvate reductase (NADH) activity"/>
    <property type="evidence" value="ECO:0007669"/>
    <property type="project" value="RHEA"/>
</dbReference>
<dbReference type="GO" id="GO:0120509">
    <property type="term" value="F:hydroxypyruvate reductase (NADPH) activity"/>
    <property type="evidence" value="ECO:0007669"/>
    <property type="project" value="RHEA"/>
</dbReference>
<dbReference type="GO" id="GO:0051287">
    <property type="term" value="F:NAD binding"/>
    <property type="evidence" value="ECO:0007669"/>
    <property type="project" value="InterPro"/>
</dbReference>
<dbReference type="CDD" id="cd05301">
    <property type="entry name" value="GDH"/>
    <property type="match status" value="1"/>
</dbReference>
<dbReference type="FunFam" id="3.40.50.720:FF:000026">
    <property type="entry name" value="Glyoxylate/hydroxypyruvate reductase B"/>
    <property type="match status" value="1"/>
</dbReference>
<dbReference type="Gene3D" id="3.40.50.720">
    <property type="entry name" value="NAD(P)-binding Rossmann-like Domain"/>
    <property type="match status" value="2"/>
</dbReference>
<dbReference type="HAMAP" id="MF_01667">
    <property type="entry name" value="2_Hacid_dh_C_GhrB"/>
    <property type="match status" value="1"/>
</dbReference>
<dbReference type="InterPro" id="IPR050223">
    <property type="entry name" value="D-isomer_2-hydroxyacid_DH"/>
</dbReference>
<dbReference type="InterPro" id="IPR006139">
    <property type="entry name" value="D-isomer_2_OHA_DH_cat_dom"/>
</dbReference>
<dbReference type="InterPro" id="IPR029753">
    <property type="entry name" value="D-isomer_DH_CS"/>
</dbReference>
<dbReference type="InterPro" id="IPR029752">
    <property type="entry name" value="D-isomer_DH_CS1"/>
</dbReference>
<dbReference type="InterPro" id="IPR006140">
    <property type="entry name" value="D-isomer_DH_NAD-bd"/>
</dbReference>
<dbReference type="InterPro" id="IPR023756">
    <property type="entry name" value="Glyo/OHPyrv_Rdtase_B"/>
</dbReference>
<dbReference type="InterPro" id="IPR036291">
    <property type="entry name" value="NAD(P)-bd_dom_sf"/>
</dbReference>
<dbReference type="NCBIfam" id="NF011938">
    <property type="entry name" value="PRK15409.1"/>
    <property type="match status" value="1"/>
</dbReference>
<dbReference type="PANTHER" id="PTHR10996">
    <property type="entry name" value="2-HYDROXYACID DEHYDROGENASE-RELATED"/>
    <property type="match status" value="1"/>
</dbReference>
<dbReference type="PANTHER" id="PTHR10996:SF283">
    <property type="entry name" value="GLYOXYLATE_HYDROXYPYRUVATE REDUCTASE B"/>
    <property type="match status" value="1"/>
</dbReference>
<dbReference type="Pfam" id="PF00389">
    <property type="entry name" value="2-Hacid_dh"/>
    <property type="match status" value="1"/>
</dbReference>
<dbReference type="Pfam" id="PF02826">
    <property type="entry name" value="2-Hacid_dh_C"/>
    <property type="match status" value="1"/>
</dbReference>
<dbReference type="SUPFAM" id="SSF52283">
    <property type="entry name" value="Formate/glycerate dehydrogenase catalytic domain-like"/>
    <property type="match status" value="1"/>
</dbReference>
<dbReference type="SUPFAM" id="SSF51735">
    <property type="entry name" value="NAD(P)-binding Rossmann-fold domains"/>
    <property type="match status" value="1"/>
</dbReference>
<dbReference type="PROSITE" id="PS00065">
    <property type="entry name" value="D_2_HYDROXYACID_DH_1"/>
    <property type="match status" value="1"/>
</dbReference>
<dbReference type="PROSITE" id="PS00671">
    <property type="entry name" value="D_2_HYDROXYACID_DH_3"/>
    <property type="match status" value="1"/>
</dbReference>
<name>GHRB_YERPP</name>
<protein>
    <recommendedName>
        <fullName evidence="1">Glyoxylate/hydroxypyruvate reductase B</fullName>
        <ecNumber evidence="1">1.1.1.79</ecNumber>
        <ecNumber evidence="1">1.1.1.81</ecNumber>
    </recommendedName>
</protein>
<feature type="chain" id="PRO_0000348407" description="Glyoxylate/hydroxypyruvate reductase B">
    <location>
        <begin position="1"/>
        <end position="326"/>
    </location>
</feature>
<feature type="active site" evidence="1">
    <location>
        <position position="237"/>
    </location>
</feature>
<feature type="active site" evidence="1">
    <location>
        <position position="266"/>
    </location>
</feature>
<feature type="active site" description="Proton donor" evidence="1">
    <location>
        <position position="285"/>
    </location>
</feature>
<reference key="1">
    <citation type="submission" date="2007-02" db="EMBL/GenBank/DDBJ databases">
        <title>Complete sequence of chromosome of Yersinia pestis Pestoides F.</title>
        <authorList>
            <consortium name="US DOE Joint Genome Institute"/>
            <person name="Copeland A."/>
            <person name="Lucas S."/>
            <person name="Lapidus A."/>
            <person name="Barry K."/>
            <person name="Detter J.C."/>
            <person name="Glavina del Rio T."/>
            <person name="Hammon N."/>
            <person name="Israni S."/>
            <person name="Dalin E."/>
            <person name="Tice H."/>
            <person name="Pitluck S."/>
            <person name="Di Bartolo G."/>
            <person name="Chain P."/>
            <person name="Malfatti S."/>
            <person name="Shin M."/>
            <person name="Vergez L."/>
            <person name="Schmutz J."/>
            <person name="Larimer F."/>
            <person name="Land M."/>
            <person name="Hauser L."/>
            <person name="Worsham P."/>
            <person name="Chu M."/>
            <person name="Bearden S."/>
            <person name="Garcia E."/>
            <person name="Richardson P."/>
        </authorList>
    </citation>
    <scope>NUCLEOTIDE SEQUENCE [LARGE SCALE GENOMIC DNA]</scope>
    <source>
        <strain>Pestoides F</strain>
    </source>
</reference>
<accession>A4TGN1</accession>
<organism>
    <name type="scientific">Yersinia pestis (strain Pestoides F)</name>
    <dbReference type="NCBI Taxonomy" id="386656"/>
    <lineage>
        <taxon>Bacteria</taxon>
        <taxon>Pseudomonadati</taxon>
        <taxon>Pseudomonadota</taxon>
        <taxon>Gammaproteobacteria</taxon>
        <taxon>Enterobacterales</taxon>
        <taxon>Yersiniaceae</taxon>
        <taxon>Yersinia</taxon>
    </lineage>
</organism>
<keyword id="KW-0963">Cytoplasm</keyword>
<keyword id="KW-0520">NAD</keyword>
<keyword id="KW-0521">NADP</keyword>
<keyword id="KW-0560">Oxidoreductase</keyword>
<evidence type="ECO:0000255" key="1">
    <source>
        <dbReference type="HAMAP-Rule" id="MF_01667"/>
    </source>
</evidence>
<comment type="function">
    <text evidence="1">Catalyzes the NADPH-dependent reduction of glyoxylate and hydroxypyruvate into glycolate and glycerate, respectively.</text>
</comment>
<comment type="catalytic activity">
    <reaction evidence="1">
        <text>glycolate + NADP(+) = glyoxylate + NADPH + H(+)</text>
        <dbReference type="Rhea" id="RHEA:10992"/>
        <dbReference type="ChEBI" id="CHEBI:15378"/>
        <dbReference type="ChEBI" id="CHEBI:29805"/>
        <dbReference type="ChEBI" id="CHEBI:36655"/>
        <dbReference type="ChEBI" id="CHEBI:57783"/>
        <dbReference type="ChEBI" id="CHEBI:58349"/>
        <dbReference type="EC" id="1.1.1.79"/>
    </reaction>
</comment>
<comment type="catalytic activity">
    <reaction evidence="1">
        <text>(R)-glycerate + NAD(+) = 3-hydroxypyruvate + NADH + H(+)</text>
        <dbReference type="Rhea" id="RHEA:17905"/>
        <dbReference type="ChEBI" id="CHEBI:15378"/>
        <dbReference type="ChEBI" id="CHEBI:16659"/>
        <dbReference type="ChEBI" id="CHEBI:17180"/>
        <dbReference type="ChEBI" id="CHEBI:57540"/>
        <dbReference type="ChEBI" id="CHEBI:57945"/>
        <dbReference type="EC" id="1.1.1.81"/>
    </reaction>
</comment>
<comment type="catalytic activity">
    <reaction evidence="1">
        <text>(R)-glycerate + NADP(+) = 3-hydroxypyruvate + NADPH + H(+)</text>
        <dbReference type="Rhea" id="RHEA:18657"/>
        <dbReference type="ChEBI" id="CHEBI:15378"/>
        <dbReference type="ChEBI" id="CHEBI:16659"/>
        <dbReference type="ChEBI" id="CHEBI:17180"/>
        <dbReference type="ChEBI" id="CHEBI:57783"/>
        <dbReference type="ChEBI" id="CHEBI:58349"/>
        <dbReference type="EC" id="1.1.1.81"/>
    </reaction>
</comment>
<comment type="subunit">
    <text evidence="1">Homodimer.</text>
</comment>
<comment type="subcellular location">
    <subcellularLocation>
        <location evidence="1">Cytoplasm</location>
    </subcellularLocation>
</comment>
<comment type="similarity">
    <text evidence="1">Belongs to the D-isomer specific 2-hydroxyacid dehydrogenase family. GhrB subfamily.</text>
</comment>
<proteinExistence type="inferred from homology"/>
<gene>
    <name evidence="1" type="primary">ghrB</name>
    <name type="ordered locus">YPDSF_0017</name>
</gene>
<sequence length="326" mass="35465">MKPSIVLYKSIPTDLHQRLAQHFTVNSFDGLTPDNQPELLAALQQAEGLIGSGGKIDQDFLQLAPNLRAASTISVGYDNFDVEALSQRGIALMHTPTVLTETVADTMMALMLSTARRVVELAERVKAGEWQESIGDDWFGVDVHHKTIGILGMGRIGMALAQRAHFGFSMPVLYTSRRPHEAAEQRFGARHCSLDTLLAEADFLCITLPMTEQTYHMIGREQLAKMKSSAILINAGRGPVVDEQALIAALQDGTIHAAGLDVFEQEPLPVDSPLLTLRNVVAVPHIGSATHETRYNMAACAVDNLINALTGTVKENCVNPQVLITH</sequence>